<keyword id="KW-0002">3D-structure</keyword>
<keyword id="KW-0025">Alternative splicing</keyword>
<keyword id="KW-0225">Disease variant</keyword>
<keyword id="KW-0256">Endoplasmic reticulum</keyword>
<keyword id="KW-0887">Epilepsy</keyword>
<keyword id="KW-0991">Intellectual disability</keyword>
<keyword id="KW-0443">Lipid metabolism</keyword>
<keyword id="KW-0460">Magnesium</keyword>
<keyword id="KW-0472">Membrane</keyword>
<keyword id="KW-0479">Metal-binding</keyword>
<keyword id="KW-1267">Proteomics identification</keyword>
<keyword id="KW-1185">Reference proteome</keyword>
<keyword id="KW-0682">Retinitis pigmentosa</keyword>
<keyword id="KW-0808">Transferase</keyword>
<accession>Q86SQ9</accession>
<accession>B7Z4B9</accession>
<accession>B7ZB20</accession>
<accession>D3DPK7</accession>
<accession>D3DPK8</accession>
<accession>D3DPK9</accession>
<accession>E9KL43</accession>
<accession>Q5T0A4</accession>
<accession>Q8NE90</accession>
<accession>Q9BTG5</accession>
<accession>Q9BTK3</accession>
<accession>Q9H905</accession>
<name>DHDDS_HUMAN</name>
<gene>
    <name evidence="19 23" type="primary">DHDDS</name>
    <name type="synonym">HDS</name>
</gene>
<feature type="chain" id="PRO_0000123749" description="Dehydrodolichyl diphosphate synthase complex subunit DHDDS">
    <location>
        <begin position="1"/>
        <end position="333"/>
    </location>
</feature>
<feature type="binding site" evidence="13 24">
    <location>
        <position position="34"/>
    </location>
    <ligand>
        <name>(2E,6E)-farnesyl diphosphate</name>
        <dbReference type="ChEBI" id="CHEBI:175763"/>
    </ligand>
</feature>
<feature type="binding site" evidence="22 25">
    <location>
        <position position="34"/>
    </location>
    <ligand>
        <name>isopentenyl diphosphate</name>
        <dbReference type="ChEBI" id="CHEBI:128769"/>
    </ligand>
</feature>
<feature type="binding site" evidence="12 13 15 24 25 26 27 28">
    <location>
        <position position="34"/>
    </location>
    <ligand>
        <name>Mg(2+)</name>
        <dbReference type="ChEBI" id="CHEBI:18420"/>
    </ligand>
</feature>
<feature type="binding site" evidence="13 24">
    <location>
        <position position="35"/>
    </location>
    <ligand>
        <name>(2E,6E)-farnesyl diphosphate</name>
        <dbReference type="ChEBI" id="CHEBI:175763"/>
    </ligand>
</feature>
<feature type="binding site" evidence="22 25">
    <location>
        <position position="35"/>
    </location>
    <ligand>
        <name>isopentenyl diphosphate</name>
        <dbReference type="ChEBI" id="CHEBI:128769"/>
    </ligand>
</feature>
<feature type="binding site" evidence="13 24">
    <location>
        <position position="37"/>
    </location>
    <ligand>
        <name>(2E,6E)-farnesyl diphosphate</name>
        <dbReference type="ChEBI" id="CHEBI:175763"/>
    </ligand>
</feature>
<feature type="binding site" evidence="22 25">
    <location>
        <position position="37"/>
    </location>
    <ligand>
        <name>isopentenyl diphosphate</name>
        <dbReference type="ChEBI" id="CHEBI:128769"/>
    </ligand>
</feature>
<feature type="binding site" evidence="13 24">
    <location>
        <position position="38"/>
    </location>
    <ligand>
        <name>(2E,6E)-farnesyl diphosphate</name>
        <dbReference type="ChEBI" id="CHEBI:175763"/>
    </ligand>
</feature>
<feature type="binding site" evidence="12 22 25">
    <location>
        <position position="38"/>
    </location>
    <ligand>
        <name>isopentenyl diphosphate</name>
        <dbReference type="ChEBI" id="CHEBI:128769"/>
    </ligand>
</feature>
<feature type="binding site" evidence="13 24">
    <location>
        <position position="85"/>
    </location>
    <ligand>
        <name>(2E,6E)-farnesyl diphosphate</name>
        <dbReference type="ChEBI" id="CHEBI:175763"/>
    </ligand>
</feature>
<feature type="binding site" evidence="12 22 25">
    <location>
        <position position="85"/>
    </location>
    <ligand>
        <name>isopentenyl diphosphate</name>
        <dbReference type="ChEBI" id="CHEBI:128769"/>
    </ligand>
</feature>
<feature type="binding site" evidence="12 22 25">
    <location>
        <position position="205"/>
    </location>
    <ligand>
        <name>isopentenyl diphosphate</name>
        <dbReference type="ChEBI" id="CHEBI:128769"/>
    </ligand>
</feature>
<feature type="binding site" evidence="12 22 25">
    <location>
        <position position="211"/>
    </location>
    <ligand>
        <name>isopentenyl diphosphate</name>
        <dbReference type="ChEBI" id="CHEBI:128769"/>
    </ligand>
</feature>
<feature type="binding site" evidence="12 22 25">
    <location>
        <position position="213"/>
    </location>
    <ligand>
        <name>isopentenyl diphosphate</name>
        <dbReference type="ChEBI" id="CHEBI:128769"/>
    </ligand>
</feature>
<feature type="splice variant" id="VSP_010030" description="In isoform 3." evidence="18">
    <location>
        <begin position="109"/>
        <end position="147"/>
    </location>
</feature>
<feature type="splice variant" id="VSP_045007" description="In isoform 4." evidence="17">
    <original>KCFLNVCFAYTSRHEISNAVREMAWGVEQGLLDPS</original>
    <variation>N</variation>
    <location>
        <begin position="147"/>
        <end position="181"/>
    </location>
</feature>
<feature type="splice variant" id="VSP_010031" description="In isoform 2." evidence="17">
    <original>Q</original>
    <variation>QQ</variation>
    <location>
        <position position="255"/>
    </location>
</feature>
<feature type="sequence variant" id="VAR_080708" description="In DEDSM; strongly reduced cis-prenyltransferase activity; uncertain significance; dbSNP:rs1553121073." evidence="11">
    <original>R</original>
    <variation>H</variation>
    <location>
        <position position="37"/>
    </location>
</feature>
<feature type="sequence variant" id="VAR_065356" description="In RP59; 5-fold reduction in catalytic activity and reduced affinity for FPP but not for IPP; dbSNP:rs147394623." evidence="5 6 10">
    <original>K</original>
    <variation>E</variation>
    <location>
        <position position="42"/>
    </location>
</feature>
<feature type="sequence variant" id="VAR_089727" description="In RP59; in a patient with congenital disorder of glycosylation." evidence="9">
    <location>
        <begin position="64"/>
        <end position="333"/>
    </location>
</feature>
<feature type="sequence variant" id="VAR_085034" description="Found in a patient with progressive myoclonus epilepsy; uncertain significance." evidence="14">
    <original>D</original>
    <variation>N</variation>
    <location>
        <position position="95"/>
    </location>
</feature>
<feature type="sequence variant" id="VAR_085035" description="Found in a patient with progressive myoclonus epilepsy; uncertain significance; dbSNP:rs1557447255." evidence="14">
    <original>R</original>
    <variation>Q</variation>
    <location>
        <position position="205"/>
    </location>
</feature>
<feature type="sequence variant" id="VAR_080709" description="In DEDSM; reduced cis-prenyltransferase activity; uncertain significance; dbSNP:rs1553122926." evidence="11 13 14">
    <original>R</original>
    <variation>Q</variation>
    <location>
        <position position="211"/>
    </location>
</feature>
<feature type="sequence variant" id="VAR_028088" description="In dbSNP:rs3816539." evidence="2 3 4">
    <original>V</original>
    <variation>M</variation>
    <location>
        <position position="253"/>
    </location>
</feature>
<feature type="mutagenesis site" description="Markedly decreases phosphatidylinositol-mediated activation of cis-prenyltransferase activity resulting in products with longer chain length; when associated with A-15 and A-19." evidence="12">
    <original>W</original>
    <variation>A</variation>
    <location>
        <position position="12"/>
    </location>
</feature>
<feature type="mutagenesis site" description="Markedly decreases phosphatidylinositol-mediated activation of cis-prenyltransferase activity resulting in products with longer chain length; when associated with A-12 and A-19." evidence="12">
    <original>F</original>
    <variation>A</variation>
    <location>
        <position position="15"/>
    </location>
</feature>
<feature type="mutagenesis site" description="Markedly decreases phosphatidylinositol-mediated activation of cis-prenyltransferase activity resulting in products with longer chain length; when associated with A-12 and A-15." evidence="12">
    <original>I</original>
    <variation>A</variation>
    <location>
        <position position="19"/>
    </location>
</feature>
<feature type="mutagenesis site" description="Strongly reduced cis-prenyltransferase activity." evidence="13">
    <original>D</original>
    <variation>A</variation>
    <variation>E</variation>
    <variation>N</variation>
    <location>
        <position position="34"/>
    </location>
</feature>
<feature type="mutagenesis site" description="Strongly reduced cis-prenyltransferase activity." evidence="13">
    <original>R</original>
    <variation>H</variation>
    <location>
        <position position="38"/>
    </location>
</feature>
<feature type="mutagenesis site" description="Affects chain elongation resulting in shorter products." evidence="12">
    <location>
        <begin position="106"/>
        <end position="109"/>
    </location>
</feature>
<feature type="mutagenesis site" description="Delays cell growth; when associated with A-313 and A-317." evidence="12">
    <original>R</original>
    <variation>A</variation>
    <location>
        <position position="306"/>
    </location>
</feature>
<feature type="mutagenesis site" description="Delays cell growth; when associated with A-306 and A-317." evidence="12">
    <original>F</original>
    <variation>A</variation>
    <location>
        <position position="313"/>
    </location>
</feature>
<feature type="mutagenesis site" description="Delays cell growth; when associated with A-306 and A-313." evidence="12">
    <original>L</original>
    <variation>A</variation>
    <location>
        <position position="317"/>
    </location>
</feature>
<feature type="sequence conflict" description="In Ref. 3; BAB14439." evidence="21" ref="3">
    <original>N</original>
    <variation>Y</variation>
    <location>
        <position position="151"/>
    </location>
</feature>
<feature type="sequence conflict" description="In Ref. 6; AAH34152." evidence="21" ref="6">
    <original>V</original>
    <variation>E</variation>
    <location>
        <position position="277"/>
    </location>
</feature>
<feature type="turn" evidence="29">
    <location>
        <begin position="2"/>
        <end position="4"/>
    </location>
</feature>
<feature type="helix" evidence="30">
    <location>
        <begin position="11"/>
        <end position="20"/>
    </location>
</feature>
<feature type="strand" evidence="30">
    <location>
        <begin position="27"/>
        <end position="32"/>
    </location>
</feature>
<feature type="helix" evidence="30">
    <location>
        <begin position="36"/>
        <end position="42"/>
    </location>
</feature>
<feature type="helix" evidence="30">
    <location>
        <begin position="47"/>
        <end position="67"/>
    </location>
</feature>
<feature type="strand" evidence="30">
    <location>
        <begin position="72"/>
        <end position="79"/>
    </location>
</feature>
<feature type="helix" evidence="30">
    <location>
        <begin position="80"/>
        <end position="84"/>
    </location>
</feature>
<feature type="helix" evidence="30">
    <location>
        <begin position="87"/>
        <end position="106"/>
    </location>
</feature>
<feature type="turn" evidence="30">
    <location>
        <begin position="107"/>
        <end position="109"/>
    </location>
</feature>
<feature type="helix" evidence="30">
    <location>
        <begin position="110"/>
        <end position="113"/>
    </location>
</feature>
<feature type="strand" evidence="30">
    <location>
        <begin position="116"/>
        <end position="122"/>
    </location>
</feature>
<feature type="helix" evidence="30">
    <location>
        <begin position="124"/>
        <end position="126"/>
    </location>
</feature>
<feature type="helix" evidence="30">
    <location>
        <begin position="129"/>
        <end position="142"/>
    </location>
</feature>
<feature type="strand" evidence="30">
    <location>
        <begin position="147"/>
        <end position="156"/>
    </location>
</feature>
<feature type="helix" evidence="30">
    <location>
        <begin position="158"/>
        <end position="174"/>
    </location>
</feature>
<feature type="helix" evidence="30">
    <location>
        <begin position="180"/>
        <end position="182"/>
    </location>
</feature>
<feature type="helix" evidence="30">
    <location>
        <begin position="185"/>
        <end position="189"/>
    </location>
</feature>
<feature type="turn" evidence="30">
    <location>
        <begin position="193"/>
        <end position="196"/>
    </location>
</feature>
<feature type="strand" evidence="30">
    <location>
        <begin position="201"/>
        <end position="206"/>
    </location>
</feature>
<feature type="strand" evidence="29">
    <location>
        <begin position="214"/>
        <end position="216"/>
    </location>
</feature>
<feature type="turn" evidence="30">
    <location>
        <begin position="217"/>
        <end position="222"/>
    </location>
</feature>
<feature type="strand" evidence="30">
    <location>
        <begin position="223"/>
        <end position="228"/>
    </location>
</feature>
<feature type="helix" evidence="30">
    <location>
        <begin position="232"/>
        <end position="234"/>
    </location>
</feature>
<feature type="helix" evidence="30">
    <location>
        <begin position="237"/>
        <end position="282"/>
    </location>
</feature>
<feature type="helix" evidence="30">
    <location>
        <begin position="283"/>
        <end position="285"/>
    </location>
</feature>
<feature type="helix" evidence="30">
    <location>
        <begin position="294"/>
        <end position="322"/>
    </location>
</feature>
<feature type="helix" evidence="31">
    <location>
        <begin position="325"/>
        <end position="327"/>
    </location>
</feature>
<proteinExistence type="evidence at protein level"/>
<reference key="1">
    <citation type="journal article" date="2003" name="Biochim. Biophys. Acta">
        <title>Identification of human dehydrodolichyl diphosphate synthase gene.</title>
        <authorList>
            <person name="Endo S."/>
            <person name="Zhang Y.-W."/>
            <person name="Takahashi S."/>
            <person name="Koyama T."/>
        </authorList>
    </citation>
    <scope>NUCLEOTIDE SEQUENCE [MRNA] (ISOFORM 1)</scope>
    <source>
        <tissue>Testis</tissue>
    </source>
</reference>
<reference key="2">
    <citation type="journal article" date="2010" name="Mol. Cell. Proteomics">
        <title>Systematic mapping and functional analysis of a family of human epididymal secretory sperm-located proteins.</title>
        <authorList>
            <person name="Li J."/>
            <person name="Liu F."/>
            <person name="Wang H."/>
            <person name="Liu X."/>
            <person name="Liu J."/>
            <person name="Li N."/>
            <person name="Wan F."/>
            <person name="Wang W."/>
            <person name="Zhang C."/>
            <person name="Jin S."/>
            <person name="Liu J."/>
            <person name="Zhu P."/>
            <person name="Liu Y."/>
        </authorList>
    </citation>
    <scope>NUCLEOTIDE SEQUENCE [MRNA] (ISOFORM 1)</scope>
    <scope>VARIANT MET-253</scope>
    <scope>TISSUE SPECIFICITY</scope>
    <source>
        <tissue>Epididymis</tissue>
    </source>
</reference>
<reference key="3">
    <citation type="journal article" date="2004" name="Nat. Genet.">
        <title>Complete sequencing and characterization of 21,243 full-length human cDNAs.</title>
        <authorList>
            <person name="Ota T."/>
            <person name="Suzuki Y."/>
            <person name="Nishikawa T."/>
            <person name="Otsuki T."/>
            <person name="Sugiyama T."/>
            <person name="Irie R."/>
            <person name="Wakamatsu A."/>
            <person name="Hayashi K."/>
            <person name="Sato H."/>
            <person name="Nagai K."/>
            <person name="Kimura K."/>
            <person name="Makita H."/>
            <person name="Sekine M."/>
            <person name="Obayashi M."/>
            <person name="Nishi T."/>
            <person name="Shibahara T."/>
            <person name="Tanaka T."/>
            <person name="Ishii S."/>
            <person name="Yamamoto J."/>
            <person name="Saito K."/>
            <person name="Kawai Y."/>
            <person name="Isono Y."/>
            <person name="Nakamura Y."/>
            <person name="Nagahari K."/>
            <person name="Murakami K."/>
            <person name="Yasuda T."/>
            <person name="Iwayanagi T."/>
            <person name="Wagatsuma M."/>
            <person name="Shiratori A."/>
            <person name="Sudo H."/>
            <person name="Hosoiri T."/>
            <person name="Kaku Y."/>
            <person name="Kodaira H."/>
            <person name="Kondo H."/>
            <person name="Sugawara M."/>
            <person name="Takahashi M."/>
            <person name="Kanda K."/>
            <person name="Yokoi T."/>
            <person name="Furuya T."/>
            <person name="Kikkawa E."/>
            <person name="Omura Y."/>
            <person name="Abe K."/>
            <person name="Kamihara K."/>
            <person name="Katsuta N."/>
            <person name="Sato K."/>
            <person name="Tanikawa M."/>
            <person name="Yamazaki M."/>
            <person name="Ninomiya K."/>
            <person name="Ishibashi T."/>
            <person name="Yamashita H."/>
            <person name="Murakawa K."/>
            <person name="Fujimori K."/>
            <person name="Tanai H."/>
            <person name="Kimata M."/>
            <person name="Watanabe M."/>
            <person name="Hiraoka S."/>
            <person name="Chiba Y."/>
            <person name="Ishida S."/>
            <person name="Ono Y."/>
            <person name="Takiguchi S."/>
            <person name="Watanabe S."/>
            <person name="Yosida M."/>
            <person name="Hotuta T."/>
            <person name="Kusano J."/>
            <person name="Kanehori K."/>
            <person name="Takahashi-Fujii A."/>
            <person name="Hara H."/>
            <person name="Tanase T.-O."/>
            <person name="Nomura Y."/>
            <person name="Togiya S."/>
            <person name="Komai F."/>
            <person name="Hara R."/>
            <person name="Takeuchi K."/>
            <person name="Arita M."/>
            <person name="Imose N."/>
            <person name="Musashino K."/>
            <person name="Yuuki H."/>
            <person name="Oshima A."/>
            <person name="Sasaki N."/>
            <person name="Aotsuka S."/>
            <person name="Yoshikawa Y."/>
            <person name="Matsunawa H."/>
            <person name="Ichihara T."/>
            <person name="Shiohata N."/>
            <person name="Sano S."/>
            <person name="Moriya S."/>
            <person name="Momiyama H."/>
            <person name="Satoh N."/>
            <person name="Takami S."/>
            <person name="Terashima Y."/>
            <person name="Suzuki O."/>
            <person name="Nakagawa S."/>
            <person name="Senoh A."/>
            <person name="Mizoguchi H."/>
            <person name="Goto Y."/>
            <person name="Shimizu F."/>
            <person name="Wakebe H."/>
            <person name="Hishigaki H."/>
            <person name="Watanabe T."/>
            <person name="Sugiyama A."/>
            <person name="Takemoto M."/>
            <person name="Kawakami B."/>
            <person name="Yamazaki M."/>
            <person name="Watanabe K."/>
            <person name="Kumagai A."/>
            <person name="Itakura S."/>
            <person name="Fukuzumi Y."/>
            <person name="Fujimori Y."/>
            <person name="Komiyama M."/>
            <person name="Tashiro H."/>
            <person name="Tanigami A."/>
            <person name="Fujiwara T."/>
            <person name="Ono T."/>
            <person name="Yamada K."/>
            <person name="Fujii Y."/>
            <person name="Ozaki K."/>
            <person name="Hirao M."/>
            <person name="Ohmori Y."/>
            <person name="Kawabata A."/>
            <person name="Hikiji T."/>
            <person name="Kobatake N."/>
            <person name="Inagaki H."/>
            <person name="Ikema Y."/>
            <person name="Okamoto S."/>
            <person name="Okitani R."/>
            <person name="Kawakami T."/>
            <person name="Noguchi S."/>
            <person name="Itoh T."/>
            <person name="Shigeta K."/>
            <person name="Senba T."/>
            <person name="Matsumura K."/>
            <person name="Nakajima Y."/>
            <person name="Mizuno T."/>
            <person name="Morinaga M."/>
            <person name="Sasaki M."/>
            <person name="Togashi T."/>
            <person name="Oyama M."/>
            <person name="Hata H."/>
            <person name="Watanabe M."/>
            <person name="Komatsu T."/>
            <person name="Mizushima-Sugano J."/>
            <person name="Satoh T."/>
            <person name="Shirai Y."/>
            <person name="Takahashi Y."/>
            <person name="Nakagawa K."/>
            <person name="Okumura K."/>
            <person name="Nagase T."/>
            <person name="Nomura N."/>
            <person name="Kikuchi H."/>
            <person name="Masuho Y."/>
            <person name="Yamashita R."/>
            <person name="Nakai K."/>
            <person name="Yada T."/>
            <person name="Nakamura Y."/>
            <person name="Ohara O."/>
            <person name="Isogai T."/>
            <person name="Sugano S."/>
        </authorList>
    </citation>
    <scope>NUCLEOTIDE SEQUENCE [LARGE SCALE MRNA] (ISOFORMS 2 AND 4)</scope>
    <scope>VARIANT MET-253</scope>
    <source>
        <tissue>Teratocarcinoma</tissue>
        <tissue>Thyroid</tissue>
    </source>
</reference>
<reference key="4">
    <citation type="journal article" date="2006" name="Nature">
        <title>The DNA sequence and biological annotation of human chromosome 1.</title>
        <authorList>
            <person name="Gregory S.G."/>
            <person name="Barlow K.F."/>
            <person name="McLay K.E."/>
            <person name="Kaul R."/>
            <person name="Swarbreck D."/>
            <person name="Dunham A."/>
            <person name="Scott C.E."/>
            <person name="Howe K.L."/>
            <person name="Woodfine K."/>
            <person name="Spencer C.C.A."/>
            <person name="Jones M.C."/>
            <person name="Gillson C."/>
            <person name="Searle S."/>
            <person name="Zhou Y."/>
            <person name="Kokocinski F."/>
            <person name="McDonald L."/>
            <person name="Evans R."/>
            <person name="Phillips K."/>
            <person name="Atkinson A."/>
            <person name="Cooper R."/>
            <person name="Jones C."/>
            <person name="Hall R.E."/>
            <person name="Andrews T.D."/>
            <person name="Lloyd C."/>
            <person name="Ainscough R."/>
            <person name="Almeida J.P."/>
            <person name="Ambrose K.D."/>
            <person name="Anderson F."/>
            <person name="Andrew R.W."/>
            <person name="Ashwell R.I.S."/>
            <person name="Aubin K."/>
            <person name="Babbage A.K."/>
            <person name="Bagguley C.L."/>
            <person name="Bailey J."/>
            <person name="Beasley H."/>
            <person name="Bethel G."/>
            <person name="Bird C.P."/>
            <person name="Bray-Allen S."/>
            <person name="Brown J.Y."/>
            <person name="Brown A.J."/>
            <person name="Buckley D."/>
            <person name="Burton J."/>
            <person name="Bye J."/>
            <person name="Carder C."/>
            <person name="Chapman J.C."/>
            <person name="Clark S.Y."/>
            <person name="Clarke G."/>
            <person name="Clee C."/>
            <person name="Cobley V."/>
            <person name="Collier R.E."/>
            <person name="Corby N."/>
            <person name="Coville G.J."/>
            <person name="Davies J."/>
            <person name="Deadman R."/>
            <person name="Dunn M."/>
            <person name="Earthrowl M."/>
            <person name="Ellington A.G."/>
            <person name="Errington H."/>
            <person name="Frankish A."/>
            <person name="Frankland J."/>
            <person name="French L."/>
            <person name="Garner P."/>
            <person name="Garnett J."/>
            <person name="Gay L."/>
            <person name="Ghori M.R.J."/>
            <person name="Gibson R."/>
            <person name="Gilby L.M."/>
            <person name="Gillett W."/>
            <person name="Glithero R.J."/>
            <person name="Grafham D.V."/>
            <person name="Griffiths C."/>
            <person name="Griffiths-Jones S."/>
            <person name="Grocock R."/>
            <person name="Hammond S."/>
            <person name="Harrison E.S.I."/>
            <person name="Hart E."/>
            <person name="Haugen E."/>
            <person name="Heath P.D."/>
            <person name="Holmes S."/>
            <person name="Holt K."/>
            <person name="Howden P.J."/>
            <person name="Hunt A.R."/>
            <person name="Hunt S.E."/>
            <person name="Hunter G."/>
            <person name="Isherwood J."/>
            <person name="James R."/>
            <person name="Johnson C."/>
            <person name="Johnson D."/>
            <person name="Joy A."/>
            <person name="Kay M."/>
            <person name="Kershaw J.K."/>
            <person name="Kibukawa M."/>
            <person name="Kimberley A.M."/>
            <person name="King A."/>
            <person name="Knights A.J."/>
            <person name="Lad H."/>
            <person name="Laird G."/>
            <person name="Lawlor S."/>
            <person name="Leongamornlert D.A."/>
            <person name="Lloyd D.M."/>
            <person name="Loveland J."/>
            <person name="Lovell J."/>
            <person name="Lush M.J."/>
            <person name="Lyne R."/>
            <person name="Martin S."/>
            <person name="Mashreghi-Mohammadi M."/>
            <person name="Matthews L."/>
            <person name="Matthews N.S.W."/>
            <person name="McLaren S."/>
            <person name="Milne S."/>
            <person name="Mistry S."/>
            <person name="Moore M.J.F."/>
            <person name="Nickerson T."/>
            <person name="O'Dell C.N."/>
            <person name="Oliver K."/>
            <person name="Palmeiri A."/>
            <person name="Palmer S.A."/>
            <person name="Parker A."/>
            <person name="Patel D."/>
            <person name="Pearce A.V."/>
            <person name="Peck A.I."/>
            <person name="Pelan S."/>
            <person name="Phelps K."/>
            <person name="Phillimore B.J."/>
            <person name="Plumb R."/>
            <person name="Rajan J."/>
            <person name="Raymond C."/>
            <person name="Rouse G."/>
            <person name="Saenphimmachak C."/>
            <person name="Sehra H.K."/>
            <person name="Sheridan E."/>
            <person name="Shownkeen R."/>
            <person name="Sims S."/>
            <person name="Skuce C.D."/>
            <person name="Smith M."/>
            <person name="Steward C."/>
            <person name="Subramanian S."/>
            <person name="Sycamore N."/>
            <person name="Tracey A."/>
            <person name="Tromans A."/>
            <person name="Van Helmond Z."/>
            <person name="Wall M."/>
            <person name="Wallis J.M."/>
            <person name="White S."/>
            <person name="Whitehead S.L."/>
            <person name="Wilkinson J.E."/>
            <person name="Willey D.L."/>
            <person name="Williams H."/>
            <person name="Wilming L."/>
            <person name="Wray P.W."/>
            <person name="Wu Z."/>
            <person name="Coulson A."/>
            <person name="Vaudin M."/>
            <person name="Sulston J.E."/>
            <person name="Durbin R.M."/>
            <person name="Hubbard T."/>
            <person name="Wooster R."/>
            <person name="Dunham I."/>
            <person name="Carter N.P."/>
            <person name="McVean G."/>
            <person name="Ross M.T."/>
            <person name="Harrow J."/>
            <person name="Olson M.V."/>
            <person name="Beck S."/>
            <person name="Rogers J."/>
            <person name="Bentley D.R."/>
        </authorList>
    </citation>
    <scope>NUCLEOTIDE SEQUENCE [LARGE SCALE GENOMIC DNA]</scope>
</reference>
<reference key="5">
    <citation type="submission" date="2005-09" db="EMBL/GenBank/DDBJ databases">
        <authorList>
            <person name="Mural R.J."/>
            <person name="Istrail S."/>
            <person name="Sutton G.G."/>
            <person name="Florea L."/>
            <person name="Halpern A.L."/>
            <person name="Mobarry C.M."/>
            <person name="Lippert R."/>
            <person name="Walenz B."/>
            <person name="Shatkay H."/>
            <person name="Dew I."/>
            <person name="Miller J.R."/>
            <person name="Flanigan M.J."/>
            <person name="Edwards N.J."/>
            <person name="Bolanos R."/>
            <person name="Fasulo D."/>
            <person name="Halldorsson B.V."/>
            <person name="Hannenhalli S."/>
            <person name="Turner R."/>
            <person name="Yooseph S."/>
            <person name="Lu F."/>
            <person name="Nusskern D.R."/>
            <person name="Shue B.C."/>
            <person name="Zheng X.H."/>
            <person name="Zhong F."/>
            <person name="Delcher A.L."/>
            <person name="Huson D.H."/>
            <person name="Kravitz S.A."/>
            <person name="Mouchard L."/>
            <person name="Reinert K."/>
            <person name="Remington K.A."/>
            <person name="Clark A.G."/>
            <person name="Waterman M.S."/>
            <person name="Eichler E.E."/>
            <person name="Adams M.D."/>
            <person name="Hunkapiller M.W."/>
            <person name="Myers E.W."/>
            <person name="Venter J.C."/>
        </authorList>
    </citation>
    <scope>NUCLEOTIDE SEQUENCE [LARGE SCALE GENOMIC DNA]</scope>
</reference>
<reference key="6">
    <citation type="journal article" date="2004" name="Genome Res.">
        <title>The status, quality, and expansion of the NIH full-length cDNA project: the Mammalian Gene Collection (MGC).</title>
        <authorList>
            <consortium name="The MGC Project Team"/>
        </authorList>
    </citation>
    <scope>NUCLEOTIDE SEQUENCE [LARGE SCALE MRNA] (ISOFORMS 1 AND 3)</scope>
    <scope>VARIANT MET-253</scope>
    <source>
        <tissue>Lung</tissue>
        <tissue>Muscle</tissue>
        <tissue>Placenta</tissue>
    </source>
</reference>
<reference key="7">
    <citation type="journal article" date="2003" name="Biochem. Biophys. Res. Commun.">
        <title>Identification and characterization of a cDNA encoding a long-chain cis-isoprenyltransferase involved in dolichyl monophosphate biosynthesis in the ER of brain cells.</title>
        <authorList>
            <person name="Shridas P."/>
            <person name="Rush J.S."/>
            <person name="Waechter C.J."/>
        </authorList>
    </citation>
    <scope>FUNCTION</scope>
    <scope>SUBCELLULAR LOCATION</scope>
</reference>
<reference key="8">
    <citation type="journal article" date="2011" name="EMBO J.">
        <title>Nogo-B receptor is necessary for cellular dolichol biosynthesis and protein N-glycosylation.</title>
        <authorList>
            <person name="Harrison K.D."/>
            <person name="Park E.J."/>
            <person name="Gao N."/>
            <person name="Kuo A."/>
            <person name="Rush J.S."/>
            <person name="Waechter C.J."/>
            <person name="Lehrman M.A."/>
            <person name="Sessa W.C."/>
        </authorList>
    </citation>
    <scope>INTERACTION WITH NUS1</scope>
</reference>
<reference key="9">
    <citation type="journal article" date="2014" name="Cell Metab.">
        <title>Mutation of Nogo-B receptor, a subunit of cis-prenyltransferase, causes a congenital disorder of glycosylation.</title>
        <authorList>
            <person name="Park E.J."/>
            <person name="Grabinska K.A."/>
            <person name="Guan Z."/>
            <person name="Stranecky V."/>
            <person name="Hartmannova H."/>
            <person name="Hodanova K."/>
            <person name="Baresova V."/>
            <person name="Sovova J."/>
            <person name="Jozsef L."/>
            <person name="Ondruskova N."/>
            <person name="Hansikova H."/>
            <person name="Honzik T."/>
            <person name="Zeman J."/>
            <person name="Hulkova H."/>
            <person name="Wen R."/>
            <person name="Kmoch S."/>
            <person name="Sessa W.C."/>
        </authorList>
    </citation>
    <scope>CATALYTIC ACTIVITY</scope>
    <scope>FUNCTION</scope>
    <scope>SUBUNIT</scope>
    <scope>PATHWAY</scope>
</reference>
<reference key="10">
    <citation type="journal article" date="2015" name="Proteomics">
        <title>N-terminome analysis of the human mitochondrial proteome.</title>
        <authorList>
            <person name="Vaca Jacome A.S."/>
            <person name="Rabilloud T."/>
            <person name="Schaeffer-Reiss C."/>
            <person name="Rompais M."/>
            <person name="Ayoub D."/>
            <person name="Lane L."/>
            <person name="Bairoch A."/>
            <person name="Van Dorsselaer A."/>
            <person name="Carapito C."/>
        </authorList>
    </citation>
    <scope>IDENTIFICATION BY MASS SPECTROMETRY [LARGE SCALE ANALYSIS]</scope>
</reference>
<reference key="11">
    <citation type="journal article" date="2017" name="J. Biol. Chem.">
        <title>A conserved C-terminal RXG motif in the NgBR subunit of cis-prenyltransferase is critical for prenyltransferase activity.</title>
        <authorList>
            <person name="Grabinska K.A."/>
            <person name="Edani B.H."/>
            <person name="Park E.J."/>
            <person name="Kraehling J.R."/>
            <person name="Sessa W.C."/>
        </authorList>
    </citation>
    <scope>COFACTOR</scope>
    <scope>SUBUNIT</scope>
    <scope>CATALYTIC ACTIVITY</scope>
    <scope>FUNCTION</scope>
    <scope>CHARACTERIZATION OF VARIANT RP59 GLU-42</scope>
    <scope>BIOPHYSICOCHEMICAL PROPERTIES</scope>
    <scope>PATHWAY</scope>
    <scope>ACTIVITY REGULATION</scope>
</reference>
<reference evidence="24" key="12">
    <citation type="journal article" date="2020" name="Nat. Commun.">
        <title>Structural basis of heterotetrameric assembly and disease mutations in the human cis-prenyltransferase complex.</title>
        <authorList>
            <person name="Bar-El M.L."/>
            <person name="Vankova P."/>
            <person name="Yeheskel A."/>
            <person name="Simhaev L."/>
            <person name="Engel H."/>
            <person name="Man P."/>
            <person name="Haitin Y."/>
            <person name="Giladi M."/>
        </authorList>
    </citation>
    <scope>X-RAY CRYSTALLOGRAPHY (2.30 ANGSTROMS) IN COMPLEX WITH NUS1; FARNESYL DIPHOSPHATE AND MAGNESIUM</scope>
    <scope>FUNCTION</scope>
    <scope>CATALYTIC ACTIVITY</scope>
    <scope>COFACTOR</scope>
    <scope>SUBUNIT</scope>
    <scope>MUTAGENESIS OF ASP-34 AND ARG-38</scope>
    <scope>CHARACTERIZATION OF VARIANTS DEDSM HIS-37 AND GLN-211</scope>
</reference>
<reference key="13">
    <citation type="journal article" date="2020" name="Proc. Natl. Acad. Sci. U.S.A.">
        <title>Structural elucidation of the cis-prenyltransferase NgBR/DHDDS complex reveals insights in regulation of protein glycosylation.</title>
        <authorList>
            <person name="Edani B.H."/>
            <person name="Grabinska K.A."/>
            <person name="Zhang R."/>
            <person name="Park E.J."/>
            <person name="Siciliano B."/>
            <person name="Surmacz L."/>
            <person name="Ha Y."/>
            <person name="Sessa W.C."/>
        </authorList>
    </citation>
    <scope>X-RAY CRYSTALLOGRAPHY (2.31 ANGSTROMS) OF 1-333 IN COMPLEX WITH NUS1; ISOPENTENYL DIPHOSPHATE AND MAGNESIUM</scope>
    <scope>FUNCTION</scope>
    <scope>CATALYTIC ACTIVITY</scope>
    <scope>COFACTOR</scope>
    <scope>ACTIVITY REGULATION</scope>
    <scope>DOMAIN</scope>
    <scope>MUTAGENESIS OF TRP-12; PHE-15; ILE-19; 106-GLU--GLU-109; ARG-306; PHE-313 AND LEU-317</scope>
</reference>
<reference evidence="25 26 27 28" key="14">
    <citation type="journal article" date="2022" name="Sci. Adv.">
        <title>Structural basis for long-chain isoprenoid synthesis by cis-prenyltransferases.</title>
        <authorList>
            <person name="Giladi M."/>
            <person name="Lisnyansky Bar-El M."/>
            <person name="Vankova P."/>
            <person name="Ferofontov A."/>
            <person name="Melvin E."/>
            <person name="Alkaderi S."/>
            <person name="Kavan D."/>
            <person name="Redko B."/>
            <person name="Haimov E."/>
            <person name="Wiener R."/>
            <person name="Man P."/>
            <person name="Haitin Y."/>
        </authorList>
    </citation>
    <scope>X-RAY CRYSTALLOGRAPHY (2.00 ANGSTROMS) IN COMPLEX WITH MAGNESIUM AND ISOPENTENYL DIPHOSPHATE</scope>
    <scope>COFACTOR</scope>
    <scope>SUBUNIT</scope>
</reference>
<reference key="15">
    <citation type="journal article" date="2011" name="Am. J. Hum. Genet.">
        <title>Whole-exome sequencing links a variant in DHDDS to retinitis pigmentosa.</title>
        <authorList>
            <person name="Zuchner S."/>
            <person name="Dallman J."/>
            <person name="Wen R."/>
            <person name="Beecham G."/>
            <person name="Naj A."/>
            <person name="Farooq A."/>
            <person name="Kohli M.A."/>
            <person name="Whitehead P.L."/>
            <person name="Hulme W."/>
            <person name="Konidari I."/>
            <person name="Edwards Y.J."/>
            <person name="Cai G."/>
            <person name="Peter I."/>
            <person name="Seo D."/>
            <person name="Buxbaum J.D."/>
            <person name="Haines J.L."/>
            <person name="Blanton S."/>
            <person name="Young J."/>
            <person name="Alfonso E."/>
            <person name="Vance J.M."/>
            <person name="Lam B.L."/>
            <person name="Pericak-Vance M.A."/>
        </authorList>
    </citation>
    <scope>VARIANT RP59 GLU-42</scope>
</reference>
<reference key="16">
    <citation type="journal article" date="2011" name="Am. J. Hum. Genet.">
        <title>A missense mutation in DHDDS, encoding dehydrodolichyl diphosphate synthase, is associated with autosomal-recessive retinitis pigmentosa in Ashkenazi Jews.</title>
        <authorList>
            <person name="Zelinger L."/>
            <person name="Banin E."/>
            <person name="Obolensky A."/>
            <person name="Mizrahi-Meissonnier L."/>
            <person name="Beryozkin A."/>
            <person name="Bandah-Rozenfeld D."/>
            <person name="Frenkel S."/>
            <person name="Ben-Yosef T."/>
            <person name="Merin S."/>
            <person name="Schwartz S.B."/>
            <person name="Cideciyan A.V."/>
            <person name="Jacobson S.G."/>
            <person name="Sharon D."/>
        </authorList>
    </citation>
    <scope>VARIANT RP59 GLU-42</scope>
    <scope>TISSUE SPECIFICITY</scope>
</reference>
<reference key="17">
    <citation type="journal article" date="2016" name="Orphanet J. Rare Dis.">
        <title>A case of fatal Type I congenital disorders of glycosylation (CDG I) associated with low dehydrodolichol diphosphate synthase (DHDDS) activity.</title>
        <authorList>
            <person name="Sabry S."/>
            <person name="Vuillaumier-Barrot S."/>
            <person name="Mintet E."/>
            <person name="Fasseu M."/>
            <person name="Valayannopoulos V."/>
            <person name="Heron D."/>
            <person name="Dorison N."/>
            <person name="Mignot C."/>
            <person name="Seta N."/>
            <person name="Chantret I."/>
            <person name="Dupre T."/>
            <person name="Moore S.E."/>
        </authorList>
    </citation>
    <scope>VARIANT RP59 64-TRP--ALA-333 DEL</scope>
</reference>
<reference key="18">
    <citation type="journal article" date="2017" name="Am. J. Hum. Genet.">
        <title>High rate of recurrent de novo mutations in developmental and epileptic encephalopathies.</title>
        <authorList>
            <consortium name="Deciphering Developmental Disorders Study"/>
            <person name="Hamdan F.F."/>
            <person name="Myers C.T."/>
            <person name="Cossette P."/>
            <person name="Lemay P."/>
            <person name="Spiegelman D."/>
            <person name="Laporte A.D."/>
            <person name="Nassif C."/>
            <person name="Diallo O."/>
            <person name="Monlong J."/>
            <person name="Cadieux-Dion M."/>
            <person name="Dobrzeniecka S."/>
            <person name="Meloche C."/>
            <person name="Retterer K."/>
            <person name="Cho M.T."/>
            <person name="Rosenfeld J.A."/>
            <person name="Bi W."/>
            <person name="Massicotte C."/>
            <person name="Miguet M."/>
            <person name="Brunga L."/>
            <person name="Regan B.M."/>
            <person name="Mo K."/>
            <person name="Tam C."/>
            <person name="Schneider A."/>
            <person name="Hollingsworth G."/>
            <person name="FitzPatrick D.R."/>
            <person name="Donaldson A."/>
            <person name="Canham N."/>
            <person name="Blair E."/>
            <person name="Kerr B."/>
            <person name="Fry A.E."/>
            <person name="Thomas R.H."/>
            <person name="Shelagh J."/>
            <person name="Hurst J.A."/>
            <person name="Brittain H."/>
            <person name="Blyth M."/>
            <person name="Lebel R.R."/>
            <person name="Gerkes E.H."/>
            <person name="Davis-Keppen L."/>
            <person name="Stein Q."/>
            <person name="Chung W.K."/>
            <person name="Dorison S.J."/>
            <person name="Benke P.J."/>
            <person name="Fassi E."/>
            <person name="Corsten-Janssen N."/>
            <person name="Kamsteeg E.J."/>
            <person name="Mau-Them F.T."/>
            <person name="Bruel A.L."/>
            <person name="Verloes A."/>
            <person name="Ounap K."/>
            <person name="Wojcik M.H."/>
            <person name="Albert D.V.F."/>
            <person name="Venkateswaran S."/>
            <person name="Ware T."/>
            <person name="Jones D."/>
            <person name="Liu Y.C."/>
            <person name="Mohammad S.S."/>
            <person name="Bizargity P."/>
            <person name="Bacino C.A."/>
            <person name="Leuzzi V."/>
            <person name="Martinelli S."/>
            <person name="Dallapiccola B."/>
            <person name="Tartaglia M."/>
            <person name="Blumkin L."/>
            <person name="Wierenga K.J."/>
            <person name="Purcarin G."/>
            <person name="O'Byrne J.J."/>
            <person name="Stockler S."/>
            <person name="Lehman A."/>
            <person name="Keren B."/>
            <person name="Nougues M.C."/>
            <person name="Mignot C."/>
            <person name="Auvin S."/>
            <person name="Nava C."/>
            <person name="Hiatt S.M."/>
            <person name="Bebin M."/>
            <person name="Shao Y."/>
            <person name="Scaglia F."/>
            <person name="Lalani S.R."/>
            <person name="Frye R.E."/>
            <person name="Jarjour I.T."/>
            <person name="Jacques S."/>
            <person name="Boucher R.M."/>
            <person name="Riou E."/>
            <person name="Srour M."/>
            <person name="Carmant L."/>
            <person name="Lortie A."/>
            <person name="Major P."/>
            <person name="Diadori P."/>
            <person name="Dubeau F."/>
            <person name="D'Anjou G."/>
            <person name="Bourque G."/>
            <person name="Berkovic S.F."/>
            <person name="Sadleir L.G."/>
            <person name="Campeau P.M."/>
            <person name="Kibar Z."/>
            <person name="Lafreniere R.G."/>
            <person name="Girard S.L."/>
            <person name="Mercimek-Mahmutoglu S."/>
            <person name="Boelman C."/>
            <person name="Rouleau G.A."/>
            <person name="Scheffer I.E."/>
            <person name="Mefford H.C."/>
            <person name="Andrade D.M."/>
            <person name="Rossignol E."/>
            <person name="Minassian B.A."/>
            <person name="Michaud J.L."/>
        </authorList>
    </citation>
    <scope>INVOLVEMENT IN DEDSM</scope>
    <scope>VARIANTS DEDSM HIS-37 AND GLN-211</scope>
</reference>
<reference key="19">
    <citation type="journal article" date="2021" name="Am. J. Hum. Genet.">
        <title>Progressive myoclonus epilepsies-Residual unsolved cases have marked genetic heterogeneity including dolichol-dependent protein glycosylation pathway genes.</title>
        <authorList>
            <person name="Courage C."/>
            <person name="Oliver K.L."/>
            <person name="Park E.J."/>
            <person name="Cameron J.M."/>
            <person name="Grabinska K.A."/>
            <person name="Muona M."/>
            <person name="Canafoglia L."/>
            <person name="Gambardella A."/>
            <person name="Said E."/>
            <person name="Afawi Z."/>
            <person name="Baykan B."/>
            <person name="Brandt C."/>
            <person name="di Bonaventura C."/>
            <person name="Chew H.B."/>
            <person name="Criscuolo C."/>
            <person name="Dibbens L.M."/>
            <person name="Castellotti B."/>
            <person name="Riguzzi P."/>
            <person name="Labate A."/>
            <person name="Filla A."/>
            <person name="Giallonardo A.T."/>
            <person name="Berecki G."/>
            <person name="Jackson C.B."/>
            <person name="Joensuu T."/>
            <person name="Damiano J.A."/>
            <person name="Kivity S."/>
            <person name="Korczyn A."/>
            <person name="Palotie A."/>
            <person name="Striano P."/>
            <person name="Uccellini D."/>
            <person name="Giuliano L."/>
            <person name="Andermann E."/>
            <person name="Scheffer I.E."/>
            <person name="Michelucci R."/>
            <person name="Bahlo M."/>
            <person name="Franceschetti S."/>
            <person name="Sessa W.C."/>
            <person name="Berkovic S.F."/>
            <person name="Lehesjoki A.E."/>
        </authorList>
    </citation>
    <scope>VARIANTS ASN-95; GLN-205 AND GLN-211</scope>
</reference>
<sequence>MSWIKEGELSLWERFCANIIKAGPMPKHIAFIMDGNRRYAKKCQVERQEGHSQGFNKLAETLRWCLNLGILEVTVYAFSIENFKRSKSEVDGLMDLARQKFSRLMEEKEKLQKHGVCIRVLGDLHLLPLDLQELIAQAVQATKNYNKCFLNVCFAYTSRHEISNAVREMAWGVEQGLLDPSDISESLLDKCLYTNRSPHPDILIRTSGEVRLSDFLLWQTSHSCLVFQPVLWPEYTFWNLFEAILQFQMNHSVLQKARDMYAEERKRQQLERDQATVTEQLLREGLQASGDAQLRRTRLHKLSARREERVQGFLQALELKRADWLARLGTASA</sequence>
<protein>
    <recommendedName>
        <fullName evidence="21">Dehydrodolichyl diphosphate synthase complex subunit DHDDS</fullName>
        <ecNumber evidence="8 10">2.5.1.87</ecNumber>
    </recommendedName>
    <alternativeName>
        <fullName evidence="16">Cis-isoprenyltransferase</fullName>
        <shortName evidence="20">CIT</shortName>
        <shortName evidence="16">Cis-IPTase</shortName>
    </alternativeName>
    <alternativeName>
        <fullName evidence="20">Cis-prenyltransferase subunit hCIT</fullName>
    </alternativeName>
    <alternativeName>
        <fullName>Epididymis tissue protein Li 189m</fullName>
    </alternativeName>
</protein>
<organism>
    <name type="scientific">Homo sapiens</name>
    <name type="common">Human</name>
    <dbReference type="NCBI Taxonomy" id="9606"/>
    <lineage>
        <taxon>Eukaryota</taxon>
        <taxon>Metazoa</taxon>
        <taxon>Chordata</taxon>
        <taxon>Craniata</taxon>
        <taxon>Vertebrata</taxon>
        <taxon>Euteleostomi</taxon>
        <taxon>Mammalia</taxon>
        <taxon>Eutheria</taxon>
        <taxon>Euarchontoglires</taxon>
        <taxon>Primates</taxon>
        <taxon>Haplorrhini</taxon>
        <taxon>Catarrhini</taxon>
        <taxon>Hominidae</taxon>
        <taxon>Homo</taxon>
    </lineage>
</organism>
<evidence type="ECO:0000269" key="1">
    <source>
    </source>
</evidence>
<evidence type="ECO:0000269" key="2">
    <source>
    </source>
</evidence>
<evidence type="ECO:0000269" key="3">
    <source>
    </source>
</evidence>
<evidence type="ECO:0000269" key="4">
    <source>
    </source>
</evidence>
<evidence type="ECO:0000269" key="5">
    <source>
    </source>
</evidence>
<evidence type="ECO:0000269" key="6">
    <source>
    </source>
</evidence>
<evidence type="ECO:0000269" key="7">
    <source>
    </source>
</evidence>
<evidence type="ECO:0000269" key="8">
    <source>
    </source>
</evidence>
<evidence type="ECO:0000269" key="9">
    <source>
    </source>
</evidence>
<evidence type="ECO:0000269" key="10">
    <source>
    </source>
</evidence>
<evidence type="ECO:0000269" key="11">
    <source>
    </source>
</evidence>
<evidence type="ECO:0000269" key="12">
    <source>
    </source>
</evidence>
<evidence type="ECO:0000269" key="13">
    <source>
    </source>
</evidence>
<evidence type="ECO:0000269" key="14">
    <source>
    </source>
</evidence>
<evidence type="ECO:0000269" key="15">
    <source>
    </source>
</evidence>
<evidence type="ECO:0000303" key="16">
    <source>
    </source>
</evidence>
<evidence type="ECO:0000303" key="17">
    <source>
    </source>
</evidence>
<evidence type="ECO:0000303" key="18">
    <source>
    </source>
</evidence>
<evidence type="ECO:0000303" key="19">
    <source>
    </source>
</evidence>
<evidence type="ECO:0000303" key="20">
    <source>
    </source>
</evidence>
<evidence type="ECO:0000305" key="21"/>
<evidence type="ECO:0000305" key="22">
    <source>
    </source>
</evidence>
<evidence type="ECO:0000312" key="23">
    <source>
        <dbReference type="HGNC" id="HGNC:20603"/>
    </source>
</evidence>
<evidence type="ECO:0007744" key="24">
    <source>
        <dbReference type="PDB" id="6Z1N"/>
    </source>
</evidence>
<evidence type="ECO:0007744" key="25">
    <source>
        <dbReference type="PDB" id="7PAX"/>
    </source>
</evidence>
<evidence type="ECO:0007744" key="26">
    <source>
        <dbReference type="PDB" id="7PAY"/>
    </source>
</evidence>
<evidence type="ECO:0007744" key="27">
    <source>
        <dbReference type="PDB" id="7PB0"/>
    </source>
</evidence>
<evidence type="ECO:0007744" key="28">
    <source>
        <dbReference type="PDB" id="7PB1"/>
    </source>
</evidence>
<evidence type="ECO:0007829" key="29">
    <source>
        <dbReference type="PDB" id="6Z1N"/>
    </source>
</evidence>
<evidence type="ECO:0007829" key="30">
    <source>
        <dbReference type="PDB" id="7PAX"/>
    </source>
</evidence>
<evidence type="ECO:0007829" key="31">
    <source>
        <dbReference type="PDB" id="7PAY"/>
    </source>
</evidence>
<dbReference type="EC" id="2.5.1.87" evidence="8 10"/>
<dbReference type="EMBL" id="AB090852">
    <property type="protein sequence ID" value="BAC57588.1"/>
    <property type="molecule type" value="mRNA"/>
</dbReference>
<dbReference type="EMBL" id="GU727641">
    <property type="protein sequence ID" value="ADU87642.1"/>
    <property type="molecule type" value="mRNA"/>
</dbReference>
<dbReference type="EMBL" id="AK023164">
    <property type="protein sequence ID" value="BAB14439.1"/>
    <property type="molecule type" value="mRNA"/>
</dbReference>
<dbReference type="EMBL" id="AK297134">
    <property type="protein sequence ID" value="BAH12505.1"/>
    <property type="molecule type" value="mRNA"/>
</dbReference>
<dbReference type="EMBL" id="AK316485">
    <property type="protein sequence ID" value="BAH14856.1"/>
    <property type="molecule type" value="mRNA"/>
</dbReference>
<dbReference type="EMBL" id="AL513365">
    <property type="status" value="NOT_ANNOTATED_CDS"/>
    <property type="molecule type" value="Genomic_DNA"/>
</dbReference>
<dbReference type="EMBL" id="CH471059">
    <property type="protein sequence ID" value="EAX07806.1"/>
    <property type="molecule type" value="Genomic_DNA"/>
</dbReference>
<dbReference type="EMBL" id="CH471059">
    <property type="protein sequence ID" value="EAX07808.1"/>
    <property type="molecule type" value="Genomic_DNA"/>
</dbReference>
<dbReference type="EMBL" id="CH471059">
    <property type="protein sequence ID" value="EAX07809.1"/>
    <property type="molecule type" value="Genomic_DNA"/>
</dbReference>
<dbReference type="EMBL" id="CH471059">
    <property type="protein sequence ID" value="EAX07810.1"/>
    <property type="molecule type" value="Genomic_DNA"/>
</dbReference>
<dbReference type="EMBL" id="CH471059">
    <property type="protein sequence ID" value="EAX07811.1"/>
    <property type="molecule type" value="Genomic_DNA"/>
</dbReference>
<dbReference type="EMBL" id="CH471059">
    <property type="protein sequence ID" value="EAX07812.1"/>
    <property type="molecule type" value="Genomic_DNA"/>
</dbReference>
<dbReference type="EMBL" id="BC003643">
    <property type="protein sequence ID" value="AAH03643.1"/>
    <property type="molecule type" value="mRNA"/>
</dbReference>
<dbReference type="EMBL" id="BC004117">
    <property type="protein sequence ID" value="AAH04117.1"/>
    <property type="molecule type" value="mRNA"/>
</dbReference>
<dbReference type="EMBL" id="BC034152">
    <property type="protein sequence ID" value="AAH34152.1"/>
    <property type="molecule type" value="mRNA"/>
</dbReference>
<dbReference type="CCDS" id="CCDS281.1">
    <molecule id="Q86SQ9-2"/>
</dbReference>
<dbReference type="CCDS" id="CCDS282.1">
    <molecule id="Q86SQ9-1"/>
</dbReference>
<dbReference type="CCDS" id="CCDS57983.1">
    <molecule id="Q86SQ9-4"/>
</dbReference>
<dbReference type="CCDS" id="CCDS57984.1">
    <molecule id="Q86SQ9-3"/>
</dbReference>
<dbReference type="RefSeq" id="NP_001230493.1">
    <molecule id="Q86SQ9-4"/>
    <property type="nucleotide sequence ID" value="NM_001243564.2"/>
</dbReference>
<dbReference type="RefSeq" id="NP_001230494.1">
    <molecule id="Q86SQ9-3"/>
    <property type="nucleotide sequence ID" value="NM_001243565.2"/>
</dbReference>
<dbReference type="RefSeq" id="NP_079163.2">
    <molecule id="Q86SQ9-2"/>
    <property type="nucleotide sequence ID" value="NM_024887.3"/>
</dbReference>
<dbReference type="RefSeq" id="NP_995583.1">
    <molecule id="Q86SQ9-1"/>
    <property type="nucleotide sequence ID" value="NM_205861.3"/>
</dbReference>
<dbReference type="RefSeq" id="XP_006710975.1">
    <property type="nucleotide sequence ID" value="XM_006710912.2"/>
</dbReference>
<dbReference type="RefSeq" id="XP_006710976.1">
    <property type="nucleotide sequence ID" value="XM_006710913.2"/>
</dbReference>
<dbReference type="RefSeq" id="XP_006710977.1">
    <property type="nucleotide sequence ID" value="XM_006710914.2"/>
</dbReference>
<dbReference type="RefSeq" id="XP_011540485.1">
    <property type="nucleotide sequence ID" value="XM_011542183.2"/>
</dbReference>
<dbReference type="RefSeq" id="XP_011540486.1">
    <property type="nucleotide sequence ID" value="XM_011542184.2"/>
</dbReference>
<dbReference type="RefSeq" id="XP_011540488.1">
    <property type="nucleotide sequence ID" value="XM_011542186.2"/>
</dbReference>
<dbReference type="RefSeq" id="XP_016857868.1">
    <property type="nucleotide sequence ID" value="XM_017002379.1"/>
</dbReference>
<dbReference type="RefSeq" id="XP_016857869.1">
    <property type="nucleotide sequence ID" value="XM_017002380.1"/>
</dbReference>
<dbReference type="RefSeq" id="XP_047286805.1">
    <molecule id="Q86SQ9-2"/>
    <property type="nucleotide sequence ID" value="XM_047430849.1"/>
</dbReference>
<dbReference type="RefSeq" id="XP_047286806.1">
    <molecule id="Q86SQ9-2"/>
    <property type="nucleotide sequence ID" value="XM_047430850.1"/>
</dbReference>
<dbReference type="RefSeq" id="XP_047286807.1">
    <molecule id="Q86SQ9-2"/>
    <property type="nucleotide sequence ID" value="XM_047430851.1"/>
</dbReference>
<dbReference type="RefSeq" id="XP_047286808.1">
    <molecule id="Q86SQ9-2"/>
    <property type="nucleotide sequence ID" value="XM_047430852.1"/>
</dbReference>
<dbReference type="RefSeq" id="XP_047286809.1">
    <molecule id="Q86SQ9-1"/>
    <property type="nucleotide sequence ID" value="XM_047430853.1"/>
</dbReference>
<dbReference type="RefSeq" id="XP_047286810.1">
    <molecule id="Q86SQ9-1"/>
    <property type="nucleotide sequence ID" value="XM_047430854.1"/>
</dbReference>
<dbReference type="RefSeq" id="XP_047286812.1">
    <molecule id="Q86SQ9-1"/>
    <property type="nucleotide sequence ID" value="XM_047430856.1"/>
</dbReference>
<dbReference type="RefSeq" id="XP_047286813.1">
    <molecule id="Q86SQ9-1"/>
    <property type="nucleotide sequence ID" value="XM_047430857.1"/>
</dbReference>
<dbReference type="RefSeq" id="XP_047286819.1">
    <molecule id="Q86SQ9-4"/>
    <property type="nucleotide sequence ID" value="XM_047430863.1"/>
</dbReference>
<dbReference type="RefSeq" id="XP_047286820.1">
    <molecule id="Q86SQ9-4"/>
    <property type="nucleotide sequence ID" value="XM_047430864.1"/>
</dbReference>
<dbReference type="RefSeq" id="XP_047286821.1">
    <molecule id="Q86SQ9-4"/>
    <property type="nucleotide sequence ID" value="XM_047430865.1"/>
</dbReference>
<dbReference type="RefSeq" id="XP_054194796.1">
    <molecule id="Q86SQ9-2"/>
    <property type="nucleotide sequence ID" value="XM_054338821.1"/>
</dbReference>
<dbReference type="RefSeq" id="XP_054194797.1">
    <molecule id="Q86SQ9-2"/>
    <property type="nucleotide sequence ID" value="XM_054338822.1"/>
</dbReference>
<dbReference type="RefSeq" id="XP_054194798.1">
    <molecule id="Q86SQ9-2"/>
    <property type="nucleotide sequence ID" value="XM_054338823.1"/>
</dbReference>
<dbReference type="RefSeq" id="XP_054194799.1">
    <molecule id="Q86SQ9-2"/>
    <property type="nucleotide sequence ID" value="XM_054338824.1"/>
</dbReference>
<dbReference type="RefSeq" id="XP_054194800.1">
    <molecule id="Q86SQ9-1"/>
    <property type="nucleotide sequence ID" value="XM_054338825.1"/>
</dbReference>
<dbReference type="RefSeq" id="XP_054194801.1">
    <molecule id="Q86SQ9-1"/>
    <property type="nucleotide sequence ID" value="XM_054338826.1"/>
</dbReference>
<dbReference type="RefSeq" id="XP_054194802.1">
    <molecule id="Q86SQ9-1"/>
    <property type="nucleotide sequence ID" value="XM_054338827.1"/>
</dbReference>
<dbReference type="RefSeq" id="XP_054194803.1">
    <molecule id="Q86SQ9-1"/>
    <property type="nucleotide sequence ID" value="XM_054338828.1"/>
</dbReference>
<dbReference type="RefSeq" id="XP_054194808.1">
    <molecule id="Q86SQ9-4"/>
    <property type="nucleotide sequence ID" value="XM_054338833.1"/>
</dbReference>
<dbReference type="RefSeq" id="XP_054194809.1">
    <molecule id="Q86SQ9-4"/>
    <property type="nucleotide sequence ID" value="XM_054338834.1"/>
</dbReference>
<dbReference type="RefSeq" id="XP_054194810.1">
    <molecule id="Q86SQ9-4"/>
    <property type="nucleotide sequence ID" value="XM_054338835.1"/>
</dbReference>
<dbReference type="PDB" id="6W2L">
    <property type="method" value="X-ray"/>
    <property type="resolution" value="2.31 A"/>
    <property type="chains" value="A=2-330"/>
</dbReference>
<dbReference type="PDB" id="6Z1N">
    <property type="method" value="X-ray"/>
    <property type="resolution" value="2.30 A"/>
    <property type="chains" value="A=1-333"/>
</dbReference>
<dbReference type="PDB" id="7PAX">
    <property type="method" value="X-ray"/>
    <property type="resolution" value="2.00 A"/>
    <property type="chains" value="A=1-333"/>
</dbReference>
<dbReference type="PDB" id="7PAY">
    <property type="method" value="X-ray"/>
    <property type="resolution" value="2.40 A"/>
    <property type="chains" value="A=1-333"/>
</dbReference>
<dbReference type="PDB" id="7PB0">
    <property type="method" value="X-ray"/>
    <property type="resolution" value="2.30 A"/>
    <property type="chains" value="A=1-333"/>
</dbReference>
<dbReference type="PDB" id="7PB1">
    <property type="method" value="X-ray"/>
    <property type="resolution" value="2.59 A"/>
    <property type="chains" value="A=1-333"/>
</dbReference>
<dbReference type="PDBsum" id="6W2L"/>
<dbReference type="PDBsum" id="6Z1N"/>
<dbReference type="PDBsum" id="7PAX"/>
<dbReference type="PDBsum" id="7PAY"/>
<dbReference type="PDBsum" id="7PB0"/>
<dbReference type="PDBsum" id="7PB1"/>
<dbReference type="SASBDB" id="Q86SQ9"/>
<dbReference type="SMR" id="Q86SQ9"/>
<dbReference type="BioGRID" id="123018">
    <property type="interactions" value="15"/>
</dbReference>
<dbReference type="ComplexPortal" id="CPX-6701">
    <property type="entry name" value="Dehydrodolichyl diphosphate synthase complex"/>
</dbReference>
<dbReference type="CORUM" id="Q86SQ9"/>
<dbReference type="FunCoup" id="Q86SQ9">
    <property type="interactions" value="1029"/>
</dbReference>
<dbReference type="IntAct" id="Q86SQ9">
    <property type="interactions" value="4"/>
</dbReference>
<dbReference type="STRING" id="9606.ENSP00000353104"/>
<dbReference type="GlyGen" id="Q86SQ9">
    <property type="glycosylation" value="1 site"/>
</dbReference>
<dbReference type="iPTMnet" id="Q86SQ9"/>
<dbReference type="PhosphoSitePlus" id="Q86SQ9"/>
<dbReference type="BioMuta" id="DHDDS"/>
<dbReference type="DMDM" id="116241329"/>
<dbReference type="jPOST" id="Q86SQ9"/>
<dbReference type="MassIVE" id="Q86SQ9"/>
<dbReference type="PaxDb" id="9606-ENSP00000353104"/>
<dbReference type="PeptideAtlas" id="Q86SQ9"/>
<dbReference type="ProteomicsDB" id="6588"/>
<dbReference type="ProteomicsDB" id="69620">
    <molecule id="Q86SQ9-1"/>
</dbReference>
<dbReference type="ProteomicsDB" id="69621">
    <molecule id="Q86SQ9-2"/>
</dbReference>
<dbReference type="ProteomicsDB" id="69622">
    <molecule id="Q86SQ9-3"/>
</dbReference>
<dbReference type="Pumba" id="Q86SQ9"/>
<dbReference type="Antibodypedia" id="16091">
    <property type="antibodies" value="110 antibodies from 22 providers"/>
</dbReference>
<dbReference type="CPTC" id="Q86SQ9">
    <property type="antibodies" value="4 antibodies"/>
</dbReference>
<dbReference type="DNASU" id="79947"/>
<dbReference type="Ensembl" id="ENST00000236342.12">
    <molecule id="Q86SQ9-1"/>
    <property type="protein sequence ID" value="ENSP00000236342.7"/>
    <property type="gene ID" value="ENSG00000117682.18"/>
</dbReference>
<dbReference type="Ensembl" id="ENST00000360009.6">
    <molecule id="Q86SQ9-2"/>
    <property type="protein sequence ID" value="ENSP00000353104.2"/>
    <property type="gene ID" value="ENSG00000117682.18"/>
</dbReference>
<dbReference type="Ensembl" id="ENST00000525682.6">
    <molecule id="Q86SQ9-4"/>
    <property type="protein sequence ID" value="ENSP00000434984.1"/>
    <property type="gene ID" value="ENSG00000117682.18"/>
</dbReference>
<dbReference type="Ensembl" id="ENST00000526219.5">
    <molecule id="Q86SQ9-3"/>
    <property type="protein sequence ID" value="ENSP00000434219.1"/>
    <property type="gene ID" value="ENSG00000117682.18"/>
</dbReference>
<dbReference type="Ensembl" id="ENST00000528557.6">
    <molecule id="Q86SQ9-1"/>
    <property type="protein sequence ID" value="ENSP00000515248.1"/>
    <property type="gene ID" value="ENSG00000117682.18"/>
</dbReference>
<dbReference type="GeneID" id="79947"/>
<dbReference type="KEGG" id="hsa:79947"/>
<dbReference type="MANE-Select" id="ENST00000236342.12">
    <property type="protein sequence ID" value="ENSP00000236342.7"/>
    <property type="RefSeq nucleotide sequence ID" value="NM_205861.3"/>
    <property type="RefSeq protein sequence ID" value="NP_995583.1"/>
</dbReference>
<dbReference type="UCSC" id="uc001bmk.4">
    <molecule id="Q86SQ9-1"/>
    <property type="organism name" value="human"/>
</dbReference>
<dbReference type="AGR" id="HGNC:20603"/>
<dbReference type="CTD" id="79947"/>
<dbReference type="DisGeNET" id="79947"/>
<dbReference type="GeneCards" id="DHDDS"/>
<dbReference type="GeneReviews" id="DHDDS"/>
<dbReference type="HGNC" id="HGNC:20603">
    <property type="gene designation" value="DHDDS"/>
</dbReference>
<dbReference type="HPA" id="ENSG00000117682">
    <property type="expression patterns" value="Low tissue specificity"/>
</dbReference>
<dbReference type="MalaCards" id="DHDDS"/>
<dbReference type="MIM" id="608172">
    <property type="type" value="gene"/>
</dbReference>
<dbReference type="MIM" id="613861">
    <property type="type" value="phenotype"/>
</dbReference>
<dbReference type="MIM" id="617836">
    <property type="type" value="phenotype"/>
</dbReference>
<dbReference type="neXtProt" id="NX_Q86SQ9"/>
<dbReference type="OpenTargets" id="ENSG00000117682"/>
<dbReference type="Orphanet" id="442835">
    <property type="disease" value="Non-specific early-onset epileptic encephalopathy"/>
</dbReference>
<dbReference type="Orphanet" id="791">
    <property type="disease" value="Retinitis pigmentosa"/>
</dbReference>
<dbReference type="PharmGKB" id="PA134867119"/>
<dbReference type="VEuPathDB" id="HostDB:ENSG00000117682"/>
<dbReference type="eggNOG" id="KOG1602">
    <property type="taxonomic scope" value="Eukaryota"/>
</dbReference>
<dbReference type="GeneTree" id="ENSGT00390000007879"/>
<dbReference type="InParanoid" id="Q86SQ9"/>
<dbReference type="OMA" id="FDRRDLW"/>
<dbReference type="OrthoDB" id="4173905at2759"/>
<dbReference type="PAN-GO" id="Q86SQ9">
    <property type="GO annotations" value="4 GO annotations based on evolutionary models"/>
</dbReference>
<dbReference type="PhylomeDB" id="Q86SQ9"/>
<dbReference type="TreeFam" id="TF323753"/>
<dbReference type="BioCyc" id="MetaCyc:HS04165-MONOMER"/>
<dbReference type="BRENDA" id="2.5.1.87">
    <property type="organism ID" value="2681"/>
</dbReference>
<dbReference type="PathwayCommons" id="Q86SQ9"/>
<dbReference type="Reactome" id="R-HSA-446199">
    <property type="pathway name" value="Synthesis of Dolichyl-phosphate"/>
</dbReference>
<dbReference type="Reactome" id="R-HSA-4755609">
    <property type="pathway name" value="Defective DHDDS causes RP59"/>
</dbReference>
<dbReference type="SABIO-RK" id="Q86SQ9"/>
<dbReference type="SignaLink" id="Q86SQ9"/>
<dbReference type="UniPathway" id="UPA00378"/>
<dbReference type="BioGRID-ORCS" id="79947">
    <property type="hits" value="841 hits in 1171 CRISPR screens"/>
</dbReference>
<dbReference type="ChiTaRS" id="DHDDS">
    <property type="organism name" value="human"/>
</dbReference>
<dbReference type="GeneWiki" id="Dehydrodolichyl_diphosphate_synthase"/>
<dbReference type="GeneWiki" id="DHDDS"/>
<dbReference type="GenomeRNAi" id="79947"/>
<dbReference type="Pharos" id="Q86SQ9">
    <property type="development level" value="Tbio"/>
</dbReference>
<dbReference type="PRO" id="PR:Q86SQ9"/>
<dbReference type="Proteomes" id="UP000005640">
    <property type="component" value="Chromosome 1"/>
</dbReference>
<dbReference type="RNAct" id="Q86SQ9">
    <property type="molecule type" value="protein"/>
</dbReference>
<dbReference type="Bgee" id="ENSG00000117682">
    <property type="expression patterns" value="Expressed in sperm and 181 other cell types or tissues"/>
</dbReference>
<dbReference type="ExpressionAtlas" id="Q86SQ9">
    <property type="expression patterns" value="baseline and differential"/>
</dbReference>
<dbReference type="GO" id="GO:1904423">
    <property type="term" value="C:dehydrodolichyl diphosphate synthase complex"/>
    <property type="evidence" value="ECO:0000314"/>
    <property type="project" value="UniProtKB"/>
</dbReference>
<dbReference type="GO" id="GO:0005783">
    <property type="term" value="C:endoplasmic reticulum"/>
    <property type="evidence" value="ECO:0000318"/>
    <property type="project" value="GO_Central"/>
</dbReference>
<dbReference type="GO" id="GO:0005789">
    <property type="term" value="C:endoplasmic reticulum membrane"/>
    <property type="evidence" value="ECO:0000314"/>
    <property type="project" value="UniProt"/>
</dbReference>
<dbReference type="GO" id="GO:0045547">
    <property type="term" value="F:ditrans,polycis-polyprenyl diphosphate synthase [(2E,6E)-farnesyl diphosphate specific] activity"/>
    <property type="evidence" value="ECO:0000314"/>
    <property type="project" value="UniProtKB"/>
</dbReference>
<dbReference type="GO" id="GO:0046872">
    <property type="term" value="F:metal ion binding"/>
    <property type="evidence" value="ECO:0007669"/>
    <property type="project" value="UniProtKB-KW"/>
</dbReference>
<dbReference type="GO" id="GO:0019408">
    <property type="term" value="P:dolichol biosynthetic process"/>
    <property type="evidence" value="ECO:0000314"/>
    <property type="project" value="UniProt"/>
</dbReference>
<dbReference type="GO" id="GO:0006489">
    <property type="term" value="P:dolichyl diphosphate biosynthetic process"/>
    <property type="evidence" value="ECO:0000314"/>
    <property type="project" value="UniProtKB"/>
</dbReference>
<dbReference type="GO" id="GO:0016094">
    <property type="term" value="P:polyprenol biosynthetic process"/>
    <property type="evidence" value="ECO:0000318"/>
    <property type="project" value="GO_Central"/>
</dbReference>
<dbReference type="CDD" id="cd00475">
    <property type="entry name" value="Cis_IPPS"/>
    <property type="match status" value="1"/>
</dbReference>
<dbReference type="FunFam" id="3.40.1180.10:FF:000006">
    <property type="entry name" value="Alkyl transferase"/>
    <property type="match status" value="1"/>
</dbReference>
<dbReference type="FunFam" id="3.40.1180.10:FF:000009">
    <property type="entry name" value="Alkyl transferase"/>
    <property type="match status" value="1"/>
</dbReference>
<dbReference type="Gene3D" id="3.40.1180.10">
    <property type="entry name" value="Decaprenyl diphosphate synthase-like"/>
    <property type="match status" value="1"/>
</dbReference>
<dbReference type="HAMAP" id="MF_01139">
    <property type="entry name" value="ISPT"/>
    <property type="match status" value="1"/>
</dbReference>
<dbReference type="InterPro" id="IPR001441">
    <property type="entry name" value="UPP_synth-like"/>
</dbReference>
<dbReference type="InterPro" id="IPR018520">
    <property type="entry name" value="UPP_synth-like_CS"/>
</dbReference>
<dbReference type="InterPro" id="IPR036424">
    <property type="entry name" value="UPP_synth-like_sf"/>
</dbReference>
<dbReference type="NCBIfam" id="TIGR00055">
    <property type="entry name" value="uppS"/>
    <property type="match status" value="1"/>
</dbReference>
<dbReference type="PANTHER" id="PTHR10291:SF43">
    <property type="entry name" value="DEHYDRODOLICHYL DIPHOSPHATE SYNTHASE COMPLEX SUBUNIT DHDDS"/>
    <property type="match status" value="1"/>
</dbReference>
<dbReference type="PANTHER" id="PTHR10291">
    <property type="entry name" value="DEHYDRODOLICHYL DIPHOSPHATE SYNTHASE FAMILY MEMBER"/>
    <property type="match status" value="1"/>
</dbReference>
<dbReference type="Pfam" id="PF01255">
    <property type="entry name" value="Prenyltransf"/>
    <property type="match status" value="1"/>
</dbReference>
<dbReference type="SUPFAM" id="SSF64005">
    <property type="entry name" value="Undecaprenyl diphosphate synthase"/>
    <property type="match status" value="1"/>
</dbReference>
<dbReference type="PROSITE" id="PS01066">
    <property type="entry name" value="UPP_SYNTHASE"/>
    <property type="match status" value="1"/>
</dbReference>
<comment type="function">
    <text evidence="7 8 10 12 13">With NUS1, forms the dehydrodolichyl diphosphate synthase (DDS) complex, an essential component of the dolichol monophosphate (Dol-P) biosynthetic machinery (PubMed:25066056, PubMed:28842490, PubMed:32817466, PubMed:33077723). Both subunits contribute to enzymatic activity, i.e. condensation of multiple copies of isopentenyl pyrophosphate (IPP) to farnesyl pyrophosphate (FPP) to produce dehydrodolichyl diphosphate (Dedol-PP), a precursor of dolichol phosphate which is utilized as a sugar carrier in protein glycosylation in the endoplasmic reticulum (ER) (PubMed:25066056, PubMed:28842490, PubMed:32817466, PubMed:33077723). Synthesizes long-chain polyprenols, mostly of C95 and C100 chain length (PubMed:32817466). Regulates the glycosylation and stability of nascent NPC2, thereby promoting trafficking of LDL-derived cholesterol (PubMed:21572394).</text>
</comment>
<comment type="catalytic activity">
    <reaction evidence="8 10 12 13">
        <text>n isopentenyl diphosphate + (2E,6E)-farnesyl diphosphate = a di-trans,poly-cis-polyprenyl diphosphate + n diphosphate</text>
        <dbReference type="Rhea" id="RHEA:53008"/>
        <dbReference type="Rhea" id="RHEA-COMP:19494"/>
        <dbReference type="ChEBI" id="CHEBI:33019"/>
        <dbReference type="ChEBI" id="CHEBI:128769"/>
        <dbReference type="ChEBI" id="CHEBI:136960"/>
        <dbReference type="ChEBI" id="CHEBI:175763"/>
        <dbReference type="EC" id="2.5.1.87"/>
    </reaction>
</comment>
<comment type="cofactor">
    <cofactor evidence="10 12 13">
        <name>Mg(2+)</name>
        <dbReference type="ChEBI" id="CHEBI:18420"/>
    </cofactor>
    <text evidence="12 13 15">Binds 1 magnesium ion per subunit.</text>
</comment>
<comment type="activity regulation">
    <text evidence="10">Activated by phospholipids including cardiolipin, phosphatidylcholine, phosphatidylethanolamine, phosphatidylinositol and phosphatidylserine.</text>
</comment>
<comment type="biophysicochemical properties">
    <kinetics>
        <KM evidence="10">11.1 uM for isopentenyl diphosphate</KM>
        <KM evidence="10">0.68 uM for (2E,6E)-farnesyl diphosphate</KM>
        <text evidence="10">Values were measured with the heterodimer. kcat is 0.58 sec(-1) with (2E,6E)-farnesyl diphosphate and isopentenyl diphosphate as substrate.</text>
    </kinetics>
    <phDependence>
        <text evidence="10">Optimum pH is 8-9. Active from pH 5.5 to 9.3.</text>
    </phDependence>
</comment>
<comment type="pathway">
    <text evidence="8">Protein modification; protein glycosylation.</text>
</comment>
<comment type="pathway">
    <text evidence="10">Lipid metabolism.</text>
</comment>
<comment type="subunit">
    <text evidence="7 8 10 13 15">The active dehydrodolichyl diphosphate synthase complex is a heterotetramer composed of a dimer of heterodimer of DHDDS and NUS1 (PubMed:25066056, PubMed:28842490, PubMed:32817466, PubMed:33077723, PubMed:35584224). Interacts with NPC2 (PubMed:21572394).</text>
</comment>
<comment type="interaction">
    <interactant intactId="EBI-26942900">
        <id>Q86SQ9</id>
    </interactant>
    <interactant intactId="EBI-6949352">
        <id>Q96E22</id>
        <label>NUS1</label>
    </interactant>
    <organismsDiffer>false</organismsDiffer>
    <experiments>6</experiments>
</comment>
<comment type="subcellular location">
    <subcellularLocation>
        <location evidence="1">Endoplasmic reticulum membrane</location>
        <topology evidence="1">Peripheral membrane protein</topology>
    </subcellularLocation>
    <text>colocalizes with calnexin.</text>
</comment>
<comment type="alternative products">
    <event type="alternative splicing"/>
    <isoform>
        <id>Q86SQ9-1</id>
        <name>1</name>
        <sequence type="displayed"/>
    </isoform>
    <isoform>
        <id>Q86SQ9-2</id>
        <name>2</name>
        <sequence type="described" ref="VSP_010031"/>
    </isoform>
    <isoform>
        <id>Q86SQ9-3</id>
        <name>3</name>
        <sequence type="described" ref="VSP_010030"/>
    </isoform>
    <isoform>
        <id>Q86SQ9-4</id>
        <name>4</name>
        <sequence type="described" ref="VSP_045007"/>
    </isoform>
</comment>
<comment type="tissue specificity">
    <text evidence="4 5">Ubiquitous (PubMed:21295282). Expressed at high levels in testis and kidney (PubMed:20736409). Expressed in epididymis (at protein level) (PubMed:20736409).</text>
</comment>
<comment type="domain">
    <text evidence="12">The catalytic site at NUS1-DHDDS interface accomodates both the allylic and the homoallylic IPP substrates to the S1 and S2 pockets respectively. The beta-phosphate groups of IPP substrates form hydrogen bonds with the RXG motif of NUS1 and four conserved residues of DHDDS (Arg-85, Arg-205, Arg-211 and Ser-213), while the allylic isopentenyl group is pointed toward the hydrophobic tunnel of the S1 pocket where the product elongation occurs.</text>
</comment>
<comment type="disease" evidence="5 6 9 10">
    <disease id="DI-03036">
        <name>Retinitis pigmentosa 59</name>
        <acronym>RP59</acronym>
        <description>A retinal dystrophy belonging to the group of pigmentary retinopathies. Retinitis pigmentosa is characterized by retinal pigment deposits visible on fundus examination and primary loss of rod photoreceptor cells followed by secondary loss of cone photoreceptors. Patients typically have night vision blindness and loss of midperipheral visual field. As their condition progresses, they lose their far peripheral visual field and eventually central vision as well.</description>
        <dbReference type="MIM" id="613861"/>
    </disease>
    <text>The disease is caused by variants affecting the gene represented in this entry.</text>
</comment>
<comment type="disease" evidence="11 13">
    <disease id="DI-05179">
        <name>Developmental delay and seizures with or without movement abnormalities</name>
        <acronym>DEDSM</acronym>
        <description>An autosomal dominant neurodevelopmental disorder characterized by global developmental delay, variable intellectual disability, and early-onset seizures with a myoclonic component. Most patients have delayed motor development and show abnormal movements, including ataxia, dystonia, and tremor.</description>
        <dbReference type="MIM" id="617836"/>
    </disease>
    <text>The disease may be caused by variants affecting the gene represented in this entry.</text>
</comment>
<comment type="miscellaneous">
    <molecule>Isoform 3</molecule>
    <text evidence="21">May be due to exon skipping.</text>
</comment>
<comment type="similarity">
    <text evidence="21">Belongs to the UPP synthase family.</text>
</comment>